<name>SAK_STAAW</name>
<keyword id="KW-0617">Plasminogen activation</keyword>
<keyword id="KW-0964">Secreted</keyword>
<keyword id="KW-0732">Signal</keyword>
<accession>Q8NVR2</accession>
<proteinExistence type="inferred from homology"/>
<evidence type="ECO:0000250" key="1"/>
<evidence type="ECO:0000305" key="2"/>
<comment type="function">
    <text evidence="1">Potent plasminogen activator that converts plasminogen into plasmin. It forms a 1:1 complex with plasmin, which in turn activates other plasminogen molecules (By similarity).</text>
</comment>
<comment type="subcellular location">
    <subcellularLocation>
        <location evidence="1">Secreted</location>
    </subcellularLocation>
</comment>
<comment type="similarity">
    <text evidence="2">Belongs to the staphylokinase family.</text>
</comment>
<organism>
    <name type="scientific">Staphylococcus aureus (strain MW2)</name>
    <dbReference type="NCBI Taxonomy" id="196620"/>
    <lineage>
        <taxon>Bacteria</taxon>
        <taxon>Bacillati</taxon>
        <taxon>Bacillota</taxon>
        <taxon>Bacilli</taxon>
        <taxon>Bacillales</taxon>
        <taxon>Staphylococcaceae</taxon>
        <taxon>Staphylococcus</taxon>
    </lineage>
</organism>
<gene>
    <name type="primary">sak</name>
    <name type="ordered locus">MW1885</name>
</gene>
<dbReference type="EMBL" id="BA000033">
    <property type="protein sequence ID" value="BAB95750.1"/>
    <property type="molecule type" value="Genomic_DNA"/>
</dbReference>
<dbReference type="RefSeq" id="WP_000920039.1">
    <property type="nucleotide sequence ID" value="NC_003923.1"/>
</dbReference>
<dbReference type="SMR" id="Q8NVR2"/>
<dbReference type="KEGG" id="sam:MW1885"/>
<dbReference type="HOGENOM" id="CLU_137975_0_0_9"/>
<dbReference type="PRO" id="PR:Q8NVR2"/>
<dbReference type="GO" id="GO:0005576">
    <property type="term" value="C:extracellular region"/>
    <property type="evidence" value="ECO:0007669"/>
    <property type="project" value="UniProtKB-SubCell"/>
</dbReference>
<dbReference type="Gene3D" id="3.10.20.130">
    <property type="match status" value="1"/>
</dbReference>
<dbReference type="InterPro" id="IPR004093">
    <property type="entry name" value="SAK"/>
</dbReference>
<dbReference type="InterPro" id="IPR036120">
    <property type="entry name" value="SAK/SK_sf"/>
</dbReference>
<dbReference type="Pfam" id="PF02821">
    <property type="entry name" value="Staphylokinase"/>
    <property type="match status" value="1"/>
</dbReference>
<dbReference type="SUPFAM" id="SSF54328">
    <property type="entry name" value="Staphylokinase/streptokinase"/>
    <property type="match status" value="1"/>
</dbReference>
<feature type="signal peptide" evidence="1">
    <location>
        <begin position="1"/>
        <end position="27"/>
    </location>
</feature>
<feature type="chain" id="PRO_0000031604" description="Staphylokinase">
    <location>
        <begin position="28"/>
        <end position="163"/>
    </location>
</feature>
<sequence>MLKRSLLFLTVLLLLFSFSSITNEVSASSSFDKGKYKKGDDASYFEPTGPYLMVNVTGVDGKGNELLSPHYVEFPIKPGTTLTKEKIEYYVEWALDATAYKEFRVVELDTSAKIEVTYYDKNKKKEETKSFPITEKGFVVPDLSEHIKNPGFNLITKVVIEKK</sequence>
<protein>
    <recommendedName>
        <fullName>Staphylokinase</fullName>
    </recommendedName>
</protein>
<reference key="1">
    <citation type="journal article" date="2002" name="Lancet">
        <title>Genome and virulence determinants of high virulence community-acquired MRSA.</title>
        <authorList>
            <person name="Baba T."/>
            <person name="Takeuchi F."/>
            <person name="Kuroda M."/>
            <person name="Yuzawa H."/>
            <person name="Aoki K."/>
            <person name="Oguchi A."/>
            <person name="Nagai Y."/>
            <person name="Iwama N."/>
            <person name="Asano K."/>
            <person name="Naimi T."/>
            <person name="Kuroda H."/>
            <person name="Cui L."/>
            <person name="Yamamoto K."/>
            <person name="Hiramatsu K."/>
        </authorList>
    </citation>
    <scope>NUCLEOTIDE SEQUENCE [LARGE SCALE GENOMIC DNA]</scope>
    <source>
        <strain>MW2</strain>
    </source>
</reference>